<gene>
    <name evidence="1" type="primary">hcp</name>
    <name type="ordered locus">SEN0845</name>
</gene>
<proteinExistence type="inferred from homology"/>
<reference key="1">
    <citation type="journal article" date="2008" name="Genome Res.">
        <title>Comparative genome analysis of Salmonella enteritidis PT4 and Salmonella gallinarum 287/91 provides insights into evolutionary and host adaptation pathways.</title>
        <authorList>
            <person name="Thomson N.R."/>
            <person name="Clayton D.J."/>
            <person name="Windhorst D."/>
            <person name="Vernikos G."/>
            <person name="Davidson S."/>
            <person name="Churcher C."/>
            <person name="Quail M.A."/>
            <person name="Stevens M."/>
            <person name="Jones M.A."/>
            <person name="Watson M."/>
            <person name="Barron A."/>
            <person name="Layton A."/>
            <person name="Pickard D."/>
            <person name="Kingsley R.A."/>
            <person name="Bignell A."/>
            <person name="Clark L."/>
            <person name="Harris B."/>
            <person name="Ormond D."/>
            <person name="Abdellah Z."/>
            <person name="Brooks K."/>
            <person name="Cherevach I."/>
            <person name="Chillingworth T."/>
            <person name="Woodward J."/>
            <person name="Norberczak H."/>
            <person name="Lord A."/>
            <person name="Arrowsmith C."/>
            <person name="Jagels K."/>
            <person name="Moule S."/>
            <person name="Mungall K."/>
            <person name="Saunders M."/>
            <person name="Whitehead S."/>
            <person name="Chabalgoity J.A."/>
            <person name="Maskell D."/>
            <person name="Humphreys T."/>
            <person name="Roberts M."/>
            <person name="Barrow P.A."/>
            <person name="Dougan G."/>
            <person name="Parkhill J."/>
        </authorList>
    </citation>
    <scope>NUCLEOTIDE SEQUENCE [LARGE SCALE GENOMIC DNA]</scope>
    <source>
        <strain>P125109</strain>
    </source>
</reference>
<protein>
    <recommendedName>
        <fullName evidence="1">Hydroxylamine reductase</fullName>
        <ecNumber evidence="1">1.7.99.1</ecNumber>
    </recommendedName>
    <alternativeName>
        <fullName evidence="1">Hybrid-cluster protein</fullName>
        <shortName evidence="1">HCP</shortName>
    </alternativeName>
    <alternativeName>
        <fullName evidence="1">Prismane protein</fullName>
    </alternativeName>
</protein>
<dbReference type="EC" id="1.7.99.1" evidence="1"/>
<dbReference type="EMBL" id="AM933172">
    <property type="protein sequence ID" value="CAR32428.1"/>
    <property type="molecule type" value="Genomic_DNA"/>
</dbReference>
<dbReference type="RefSeq" id="WP_000458786.1">
    <property type="nucleotide sequence ID" value="NC_011294.1"/>
</dbReference>
<dbReference type="SMR" id="B5QYM1"/>
<dbReference type="KEGG" id="set:SEN0845"/>
<dbReference type="HOGENOM" id="CLU_038344_2_0_6"/>
<dbReference type="Proteomes" id="UP000000613">
    <property type="component" value="Chromosome"/>
</dbReference>
<dbReference type="GO" id="GO:0005737">
    <property type="term" value="C:cytoplasm"/>
    <property type="evidence" value="ECO:0007669"/>
    <property type="project" value="UniProtKB-SubCell"/>
</dbReference>
<dbReference type="GO" id="GO:0051537">
    <property type="term" value="F:2 iron, 2 sulfur cluster binding"/>
    <property type="evidence" value="ECO:0007669"/>
    <property type="project" value="UniProtKB-KW"/>
</dbReference>
<dbReference type="GO" id="GO:0050418">
    <property type="term" value="F:hydroxylamine reductase activity"/>
    <property type="evidence" value="ECO:0007669"/>
    <property type="project" value="UniProtKB-UniRule"/>
</dbReference>
<dbReference type="GO" id="GO:0046872">
    <property type="term" value="F:metal ion binding"/>
    <property type="evidence" value="ECO:0007669"/>
    <property type="project" value="UniProtKB-KW"/>
</dbReference>
<dbReference type="GO" id="GO:0004601">
    <property type="term" value="F:peroxidase activity"/>
    <property type="evidence" value="ECO:0007669"/>
    <property type="project" value="TreeGrafter"/>
</dbReference>
<dbReference type="GO" id="GO:0042542">
    <property type="term" value="P:response to hydrogen peroxide"/>
    <property type="evidence" value="ECO:0007669"/>
    <property type="project" value="TreeGrafter"/>
</dbReference>
<dbReference type="CDD" id="cd01914">
    <property type="entry name" value="HCP"/>
    <property type="match status" value="1"/>
</dbReference>
<dbReference type="FunFam" id="1.20.1270.20:FF:000001">
    <property type="entry name" value="Hydroxylamine reductase"/>
    <property type="match status" value="1"/>
</dbReference>
<dbReference type="FunFam" id="1.20.1270.20:FF:000002">
    <property type="entry name" value="Hydroxylamine reductase"/>
    <property type="match status" value="1"/>
</dbReference>
<dbReference type="FunFam" id="3.40.50.2030:FF:000001">
    <property type="entry name" value="Hydroxylamine reductase"/>
    <property type="match status" value="1"/>
</dbReference>
<dbReference type="FunFam" id="3.40.50.2030:FF:000002">
    <property type="entry name" value="Hydroxylamine reductase"/>
    <property type="match status" value="1"/>
</dbReference>
<dbReference type="Gene3D" id="1.20.1270.20">
    <property type="match status" value="2"/>
</dbReference>
<dbReference type="Gene3D" id="3.40.50.2030">
    <property type="match status" value="2"/>
</dbReference>
<dbReference type="HAMAP" id="MF_00069">
    <property type="entry name" value="Hydroxylam_reduct"/>
    <property type="match status" value="1"/>
</dbReference>
<dbReference type="InterPro" id="IPR004137">
    <property type="entry name" value="HCP/CODH"/>
</dbReference>
<dbReference type="InterPro" id="IPR010048">
    <property type="entry name" value="Hydroxylam_reduct"/>
</dbReference>
<dbReference type="InterPro" id="IPR016099">
    <property type="entry name" value="Prismane-like_a/b-sand"/>
</dbReference>
<dbReference type="InterPro" id="IPR011254">
    <property type="entry name" value="Prismane-like_sf"/>
</dbReference>
<dbReference type="InterPro" id="IPR016100">
    <property type="entry name" value="Prismane_a-bundle"/>
</dbReference>
<dbReference type="NCBIfam" id="TIGR01703">
    <property type="entry name" value="hybrid_clust"/>
    <property type="match status" value="1"/>
</dbReference>
<dbReference type="NCBIfam" id="NF003658">
    <property type="entry name" value="PRK05290.1"/>
    <property type="match status" value="1"/>
</dbReference>
<dbReference type="PANTHER" id="PTHR30109">
    <property type="entry name" value="HYDROXYLAMINE REDUCTASE"/>
    <property type="match status" value="1"/>
</dbReference>
<dbReference type="PANTHER" id="PTHR30109:SF0">
    <property type="entry name" value="HYDROXYLAMINE REDUCTASE"/>
    <property type="match status" value="1"/>
</dbReference>
<dbReference type="Pfam" id="PF03063">
    <property type="entry name" value="Prismane"/>
    <property type="match status" value="1"/>
</dbReference>
<dbReference type="PIRSF" id="PIRSF000076">
    <property type="entry name" value="HCP"/>
    <property type="match status" value="1"/>
</dbReference>
<dbReference type="SUPFAM" id="SSF56821">
    <property type="entry name" value="Prismane protein-like"/>
    <property type="match status" value="1"/>
</dbReference>
<name>HCP_SALEP</name>
<comment type="function">
    <text evidence="1">Catalyzes the reduction of hydroxylamine to form NH(3) and H(2)O.</text>
</comment>
<comment type="catalytic activity">
    <reaction evidence="1">
        <text>A + NH4(+) + H2O = hydroxylamine + AH2 + H(+)</text>
        <dbReference type="Rhea" id="RHEA:22052"/>
        <dbReference type="ChEBI" id="CHEBI:13193"/>
        <dbReference type="ChEBI" id="CHEBI:15377"/>
        <dbReference type="ChEBI" id="CHEBI:15378"/>
        <dbReference type="ChEBI" id="CHEBI:15429"/>
        <dbReference type="ChEBI" id="CHEBI:17499"/>
        <dbReference type="ChEBI" id="CHEBI:28938"/>
        <dbReference type="EC" id="1.7.99.1"/>
    </reaction>
</comment>
<comment type="cofactor">
    <cofactor evidence="1">
        <name>[2Fe-2S] cluster</name>
        <dbReference type="ChEBI" id="CHEBI:190135"/>
    </cofactor>
    <text evidence="1">Binds 1 [2Fe-2S] cluster.</text>
</comment>
<comment type="cofactor">
    <cofactor evidence="1">
        <name>hybrid [4Fe-2O-2S] cluster</name>
        <dbReference type="ChEBI" id="CHEBI:60519"/>
    </cofactor>
    <text evidence="1">Binds 1 hybrid [4Fe-2O-2S] cluster.</text>
</comment>
<comment type="subcellular location">
    <subcellularLocation>
        <location evidence="1">Cytoplasm</location>
    </subcellularLocation>
</comment>
<comment type="similarity">
    <text evidence="1">Belongs to the HCP family.</text>
</comment>
<feature type="chain" id="PRO_1000092346" description="Hydroxylamine reductase">
    <location>
        <begin position="1"/>
        <end position="550"/>
    </location>
</feature>
<feature type="binding site" evidence="1">
    <location>
        <position position="3"/>
    </location>
    <ligand>
        <name>[2Fe-2S] cluster</name>
        <dbReference type="ChEBI" id="CHEBI:190135"/>
    </ligand>
</feature>
<feature type="binding site" evidence="1">
    <location>
        <position position="6"/>
    </location>
    <ligand>
        <name>[2Fe-2S] cluster</name>
        <dbReference type="ChEBI" id="CHEBI:190135"/>
    </ligand>
</feature>
<feature type="binding site" evidence="1">
    <location>
        <position position="18"/>
    </location>
    <ligand>
        <name>[2Fe-2S] cluster</name>
        <dbReference type="ChEBI" id="CHEBI:190135"/>
    </ligand>
</feature>
<feature type="binding site" evidence="1">
    <location>
        <position position="25"/>
    </location>
    <ligand>
        <name>[2Fe-2S] cluster</name>
        <dbReference type="ChEBI" id="CHEBI:190135"/>
    </ligand>
</feature>
<feature type="binding site" evidence="1">
    <location>
        <position position="249"/>
    </location>
    <ligand>
        <name>hybrid [4Fe-2O-2S] cluster</name>
        <dbReference type="ChEBI" id="CHEBI:60519"/>
    </ligand>
</feature>
<feature type="binding site" evidence="1">
    <location>
        <position position="273"/>
    </location>
    <ligand>
        <name>hybrid [4Fe-2O-2S] cluster</name>
        <dbReference type="ChEBI" id="CHEBI:60519"/>
    </ligand>
</feature>
<feature type="binding site" evidence="1">
    <location>
        <position position="317"/>
    </location>
    <ligand>
        <name>hybrid [4Fe-2O-2S] cluster</name>
        <dbReference type="ChEBI" id="CHEBI:60519"/>
    </ligand>
</feature>
<feature type="binding site" description="via persulfide group" evidence="1">
    <location>
        <position position="405"/>
    </location>
    <ligand>
        <name>hybrid [4Fe-2O-2S] cluster</name>
        <dbReference type="ChEBI" id="CHEBI:60519"/>
    </ligand>
</feature>
<feature type="binding site" evidence="1">
    <location>
        <position position="433"/>
    </location>
    <ligand>
        <name>hybrid [4Fe-2O-2S] cluster</name>
        <dbReference type="ChEBI" id="CHEBI:60519"/>
    </ligand>
</feature>
<feature type="binding site" evidence="1">
    <location>
        <position position="458"/>
    </location>
    <ligand>
        <name>hybrid [4Fe-2O-2S] cluster</name>
        <dbReference type="ChEBI" id="CHEBI:60519"/>
    </ligand>
</feature>
<feature type="binding site" evidence="1">
    <location>
        <position position="492"/>
    </location>
    <ligand>
        <name>hybrid [4Fe-2O-2S] cluster</name>
        <dbReference type="ChEBI" id="CHEBI:60519"/>
    </ligand>
</feature>
<feature type="binding site" evidence="1">
    <location>
        <position position="494"/>
    </location>
    <ligand>
        <name>hybrid [4Fe-2O-2S] cluster</name>
        <dbReference type="ChEBI" id="CHEBI:60519"/>
    </ligand>
</feature>
<feature type="modified residue" description="Cysteine persulfide" evidence="1">
    <location>
        <position position="405"/>
    </location>
</feature>
<accession>B5QYM1</accession>
<evidence type="ECO:0000255" key="1">
    <source>
        <dbReference type="HAMAP-Rule" id="MF_00069"/>
    </source>
</evidence>
<sequence length="550" mass="60088">MFCVQCEQTIRTPAGNGCSYAQGMCGKTAETSDLQDLLIAALQGLSAWAVKAREYGIINHDVDNFAPRAFFSTLTNVNFDSPRIVGYAREAIALREALKAQCLSVDANAHCDNPMADLQLVSDDLGELQRQAAEFTPNKDKAAIGENILGLRLLCLYGLKGAAAYMEHAHVLGQYDNDIYAQYHKIMAWLGTWPADMNALLECAMEIGQMNFKVMSILDAGETTKYGHPTPTQVNVKATEGKCILISGHDLKDLYNLLEQTEGTGVNVYTHGEMLPAHGYPELRKFKHLVGNYGSGWQNQQVEFARFPGPIVMTSNCIIDPTVGSYDDRIWTRSIVGWPGVSHLEGDDFGPVIAQAQQMAGFPYSEIPHLITVGFGRQTLLGAADTLIDLVSREKLRHIFLVGGCDGARGERNYFTDFATSVPDDCLILTLACGKYRFNKLEFGDIEGLPRLVDAGQCNDAYSAIILAVTLAEKLGCGVNDLPLSLVLSWFEQKAIVILLTLLSLGVKNIVTGPTAPGFFTPDLLAVLNEKFGLRSVTTVEEDMKQLLSA</sequence>
<keyword id="KW-0001">2Fe-2S</keyword>
<keyword id="KW-0963">Cytoplasm</keyword>
<keyword id="KW-0408">Iron</keyword>
<keyword id="KW-0411">Iron-sulfur</keyword>
<keyword id="KW-0479">Metal-binding</keyword>
<keyword id="KW-0560">Oxidoreductase</keyword>
<organism>
    <name type="scientific">Salmonella enteritidis PT4 (strain P125109)</name>
    <dbReference type="NCBI Taxonomy" id="550537"/>
    <lineage>
        <taxon>Bacteria</taxon>
        <taxon>Pseudomonadati</taxon>
        <taxon>Pseudomonadota</taxon>
        <taxon>Gammaproteobacteria</taxon>
        <taxon>Enterobacterales</taxon>
        <taxon>Enterobacteriaceae</taxon>
        <taxon>Salmonella</taxon>
    </lineage>
</organism>